<name>ILVY_ECOLI</name>
<gene>
    <name type="primary">ilvY</name>
    <name type="ordered locus">b3773</name>
    <name type="ordered locus">JW3746</name>
</gene>
<dbReference type="EMBL" id="M11689">
    <property type="protein sequence ID" value="AAA24028.1"/>
    <property type="molecule type" value="Genomic_DNA"/>
</dbReference>
<dbReference type="EMBL" id="M87049">
    <property type="protein sequence ID" value="AAA67576.1"/>
    <property type="molecule type" value="Genomic_DNA"/>
</dbReference>
<dbReference type="EMBL" id="U00096">
    <property type="protein sequence ID" value="AAC77493.1"/>
    <property type="molecule type" value="Genomic_DNA"/>
</dbReference>
<dbReference type="EMBL" id="AP009048">
    <property type="protein sequence ID" value="BAE77524.1"/>
    <property type="molecule type" value="Genomic_DNA"/>
</dbReference>
<dbReference type="EMBL" id="M32253">
    <property type="protein sequence ID" value="AAA24025.1"/>
    <property type="molecule type" value="Genomic_DNA"/>
</dbReference>
<dbReference type="PIR" id="B26287">
    <property type="entry name" value="RGECIY"/>
</dbReference>
<dbReference type="RefSeq" id="NP_418221.1">
    <property type="nucleotide sequence ID" value="NC_000913.3"/>
</dbReference>
<dbReference type="RefSeq" id="WP_000365791.1">
    <property type="nucleotide sequence ID" value="NZ_SSZK01000025.1"/>
</dbReference>
<dbReference type="SMR" id="P05827"/>
<dbReference type="BioGRID" id="4263332">
    <property type="interactions" value="132"/>
</dbReference>
<dbReference type="BioGRID" id="852584">
    <property type="interactions" value="4"/>
</dbReference>
<dbReference type="DIP" id="DIP-10028N"/>
<dbReference type="FunCoup" id="P05827">
    <property type="interactions" value="20"/>
</dbReference>
<dbReference type="IntAct" id="P05827">
    <property type="interactions" value="4"/>
</dbReference>
<dbReference type="STRING" id="511145.b3773"/>
<dbReference type="jPOST" id="P05827"/>
<dbReference type="PaxDb" id="511145-b3773"/>
<dbReference type="EnsemblBacteria" id="AAC77493">
    <property type="protein sequence ID" value="AAC77493"/>
    <property type="gene ID" value="b3773"/>
</dbReference>
<dbReference type="GeneID" id="948284"/>
<dbReference type="KEGG" id="ecj:JW3746"/>
<dbReference type="KEGG" id="eco:b3773"/>
<dbReference type="KEGG" id="ecoc:C3026_20435"/>
<dbReference type="PATRIC" id="fig|511145.12.peg.3890"/>
<dbReference type="EchoBASE" id="EB0498"/>
<dbReference type="eggNOG" id="COG0583">
    <property type="taxonomic scope" value="Bacteria"/>
</dbReference>
<dbReference type="HOGENOM" id="CLU_039613_6_1_6"/>
<dbReference type="InParanoid" id="P05827"/>
<dbReference type="OMA" id="FERDNRS"/>
<dbReference type="OrthoDB" id="9803735at2"/>
<dbReference type="PhylomeDB" id="P05827"/>
<dbReference type="BioCyc" id="EcoCyc:PD00200"/>
<dbReference type="PRO" id="PR:P05827"/>
<dbReference type="Proteomes" id="UP000000625">
    <property type="component" value="Chromosome"/>
</dbReference>
<dbReference type="GO" id="GO:0005737">
    <property type="term" value="C:cytoplasm"/>
    <property type="evidence" value="ECO:0007669"/>
    <property type="project" value="UniProtKB-SubCell"/>
</dbReference>
<dbReference type="GO" id="GO:0003700">
    <property type="term" value="F:DNA-binding transcription factor activity"/>
    <property type="evidence" value="ECO:0007669"/>
    <property type="project" value="InterPro"/>
</dbReference>
<dbReference type="GO" id="GO:0000976">
    <property type="term" value="F:transcription cis-regulatory region binding"/>
    <property type="evidence" value="ECO:0000318"/>
    <property type="project" value="GO_Central"/>
</dbReference>
<dbReference type="GO" id="GO:0008652">
    <property type="term" value="P:amino acid biosynthetic process"/>
    <property type="evidence" value="ECO:0007669"/>
    <property type="project" value="UniProtKB-KW"/>
</dbReference>
<dbReference type="GO" id="GO:0009082">
    <property type="term" value="P:branched-chain amino acid biosynthetic process"/>
    <property type="evidence" value="ECO:0007669"/>
    <property type="project" value="UniProtKB-KW"/>
</dbReference>
<dbReference type="GO" id="GO:0006355">
    <property type="term" value="P:regulation of DNA-templated transcription"/>
    <property type="evidence" value="ECO:0000318"/>
    <property type="project" value="GO_Central"/>
</dbReference>
<dbReference type="CDD" id="cd08430">
    <property type="entry name" value="PBP2_IlvY"/>
    <property type="match status" value="1"/>
</dbReference>
<dbReference type="FunFam" id="1.10.10.10:FF:000001">
    <property type="entry name" value="LysR family transcriptional regulator"/>
    <property type="match status" value="1"/>
</dbReference>
<dbReference type="Gene3D" id="3.40.190.10">
    <property type="entry name" value="Periplasmic binding protein-like II"/>
    <property type="match status" value="2"/>
</dbReference>
<dbReference type="Gene3D" id="1.10.10.10">
    <property type="entry name" value="Winged helix-like DNA-binding domain superfamily/Winged helix DNA-binding domain"/>
    <property type="match status" value="1"/>
</dbReference>
<dbReference type="InterPro" id="IPR037404">
    <property type="entry name" value="IlvY_PBP2"/>
</dbReference>
<dbReference type="InterPro" id="IPR005119">
    <property type="entry name" value="LysR_subst-bd"/>
</dbReference>
<dbReference type="InterPro" id="IPR000847">
    <property type="entry name" value="Tscrpt_reg_HTH_LysR"/>
</dbReference>
<dbReference type="InterPro" id="IPR036388">
    <property type="entry name" value="WH-like_DNA-bd_sf"/>
</dbReference>
<dbReference type="InterPro" id="IPR036390">
    <property type="entry name" value="WH_DNA-bd_sf"/>
</dbReference>
<dbReference type="NCBIfam" id="NF008722">
    <property type="entry name" value="PRK11716.1"/>
    <property type="match status" value="1"/>
</dbReference>
<dbReference type="PANTHER" id="PTHR30126">
    <property type="entry name" value="HTH-TYPE TRANSCRIPTIONAL REGULATOR"/>
    <property type="match status" value="1"/>
</dbReference>
<dbReference type="PANTHER" id="PTHR30126:SF81">
    <property type="entry name" value="HTH-TYPE TRANSCRIPTIONAL REGULATOR ILVY"/>
    <property type="match status" value="1"/>
</dbReference>
<dbReference type="Pfam" id="PF00126">
    <property type="entry name" value="HTH_1"/>
    <property type="match status" value="1"/>
</dbReference>
<dbReference type="Pfam" id="PF03466">
    <property type="entry name" value="LysR_substrate"/>
    <property type="match status" value="1"/>
</dbReference>
<dbReference type="PRINTS" id="PR00039">
    <property type="entry name" value="HTHLYSR"/>
</dbReference>
<dbReference type="SUPFAM" id="SSF53850">
    <property type="entry name" value="Periplasmic binding protein-like II"/>
    <property type="match status" value="1"/>
</dbReference>
<dbReference type="SUPFAM" id="SSF46785">
    <property type="entry name" value="Winged helix' DNA-binding domain"/>
    <property type="match status" value="1"/>
</dbReference>
<dbReference type="PROSITE" id="PS50931">
    <property type="entry name" value="HTH_LYSR"/>
    <property type="match status" value="1"/>
</dbReference>
<organism>
    <name type="scientific">Escherichia coli (strain K12)</name>
    <dbReference type="NCBI Taxonomy" id="83333"/>
    <lineage>
        <taxon>Bacteria</taxon>
        <taxon>Pseudomonadati</taxon>
        <taxon>Pseudomonadota</taxon>
        <taxon>Gammaproteobacteria</taxon>
        <taxon>Enterobacterales</taxon>
        <taxon>Enterobacteriaceae</taxon>
        <taxon>Escherichia</taxon>
    </lineage>
</organism>
<accession>P05827</accession>
<accession>Q2M882</accession>
<protein>
    <recommendedName>
        <fullName>HTH-type transcriptional regulator IlvY</fullName>
    </recommendedName>
</protein>
<proteinExistence type="inferred from homology"/>
<comment type="function">
    <text>This protein activates the transcription of the ilvC gene in the presence of acetolactate or acetohydroxybutyrate. IlvY is also a negative regulator of its own expression.</text>
</comment>
<comment type="subcellular location">
    <subcellularLocation>
        <location>Cytoplasm</location>
    </subcellularLocation>
</comment>
<comment type="similarity">
    <text evidence="2">Belongs to the LysR transcriptional regulatory family.</text>
</comment>
<feature type="chain" id="PRO_0000105655" description="HTH-type transcriptional regulator IlvY">
    <location>
        <begin position="1"/>
        <end position="297"/>
    </location>
</feature>
<feature type="domain" description="HTH lysR-type" evidence="1">
    <location>
        <begin position="1"/>
        <end position="58"/>
    </location>
</feature>
<feature type="DNA-binding region" description="H-T-H motif" evidence="1">
    <location>
        <begin position="18"/>
        <end position="37"/>
    </location>
</feature>
<reference key="1">
    <citation type="journal article" date="1986" name="J. Biol. Chem.">
        <title>Nucleotide sequence and in vivo expression of the ilvY and ilvC genes in Escherichia coli K12. Transcription from divergent overlapping promoters.</title>
        <authorList>
            <person name="Wek R.C."/>
            <person name="Hatfield G.W."/>
        </authorList>
    </citation>
    <scope>NUCLEOTIDE SEQUENCE [GENOMIC DNA]</scope>
    <source>
        <strain>K12</strain>
    </source>
</reference>
<reference key="2">
    <citation type="journal article" date="1992" name="Science">
        <title>Analysis of the Escherichia coli genome: DNA sequence of the region from 84.5 to 86.5 minutes.</title>
        <authorList>
            <person name="Daniels D.L."/>
            <person name="Plunkett G. III"/>
            <person name="Burland V.D."/>
            <person name="Blattner F.R."/>
        </authorList>
    </citation>
    <scope>NUCLEOTIDE SEQUENCE [LARGE SCALE GENOMIC DNA]</scope>
    <source>
        <strain>K12 / MG1655 / ATCC 47076</strain>
    </source>
</reference>
<reference key="3">
    <citation type="journal article" date="1997" name="Science">
        <title>The complete genome sequence of Escherichia coli K-12.</title>
        <authorList>
            <person name="Blattner F.R."/>
            <person name="Plunkett G. III"/>
            <person name="Bloch C.A."/>
            <person name="Perna N.T."/>
            <person name="Burland V."/>
            <person name="Riley M."/>
            <person name="Collado-Vides J."/>
            <person name="Glasner J.D."/>
            <person name="Rode C.K."/>
            <person name="Mayhew G.F."/>
            <person name="Gregor J."/>
            <person name="Davis N.W."/>
            <person name="Kirkpatrick H.A."/>
            <person name="Goeden M.A."/>
            <person name="Rose D.J."/>
            <person name="Mau B."/>
            <person name="Shao Y."/>
        </authorList>
    </citation>
    <scope>NUCLEOTIDE SEQUENCE [LARGE SCALE GENOMIC DNA]</scope>
    <source>
        <strain>K12 / MG1655 / ATCC 47076</strain>
    </source>
</reference>
<reference key="4">
    <citation type="journal article" date="2006" name="Mol. Syst. Biol.">
        <title>Highly accurate genome sequences of Escherichia coli K-12 strains MG1655 and W3110.</title>
        <authorList>
            <person name="Hayashi K."/>
            <person name="Morooka N."/>
            <person name="Yamamoto Y."/>
            <person name="Fujita K."/>
            <person name="Isono K."/>
            <person name="Choi S."/>
            <person name="Ohtsubo E."/>
            <person name="Baba T."/>
            <person name="Wanner B.L."/>
            <person name="Mori H."/>
            <person name="Horiuchi T."/>
        </authorList>
    </citation>
    <scope>NUCLEOTIDE SEQUENCE [LARGE SCALE GENOMIC DNA]</scope>
    <source>
        <strain>K12 / W3110 / ATCC 27325 / DSM 5911</strain>
    </source>
</reference>
<reference key="5">
    <citation type="journal article" date="1987" name="Nucleic Acids Res.">
        <title>The complete nucleotide sequence of the ilvGMEDA operon of Escherichia coli K-12.</title>
        <authorList>
            <person name="Lawther R.P."/>
            <person name="Wek R.C."/>
            <person name="Lopes J.M."/>
            <person name="Pereira R."/>
            <person name="Taillon B.E."/>
            <person name="Hatfield G.W."/>
        </authorList>
    </citation>
    <scope>NUCLEOTIDE SEQUENCE [GENOMIC DNA] OF 264-297</scope>
    <source>
        <strain>K12</strain>
    </source>
</reference>
<evidence type="ECO:0000255" key="1">
    <source>
        <dbReference type="PROSITE-ProRule" id="PRU00253"/>
    </source>
</evidence>
<evidence type="ECO:0000305" key="2"/>
<keyword id="KW-0010">Activator</keyword>
<keyword id="KW-0028">Amino-acid biosynthesis</keyword>
<keyword id="KW-0100">Branched-chain amino acid biosynthesis</keyword>
<keyword id="KW-0963">Cytoplasm</keyword>
<keyword id="KW-0238">DNA-binding</keyword>
<keyword id="KW-1185">Reference proteome</keyword>
<keyword id="KW-0678">Repressor</keyword>
<keyword id="KW-0804">Transcription</keyword>
<keyword id="KW-0805">Transcription regulation</keyword>
<sequence length="297" mass="33204">MDLRDLKTFLHLAESRHFGRSARAMHVSPSTLSRQIQRLEEDLGQPLFVRDNRTVTLTEAGEELRVFAQQTLLQYQQLRHTIDQQGPSLSGELHIFCSVTAAYSHLPPILDRFRAEHPSVEIKLTTGDAADAMEKVVTGEADLAIAGKPETLPGAVAFSMLENLAVVLIAPALPCPVRNQVSVEKPDWSTVPFIMADQGPVRRRIELWFRRNKISNPMIYATVGGHEAMVSMVALGCGVALLPEVVLENSPEPVRNRVMILERSDEKTPFELGVCAQKKRLHEPLIEAFWKILPNHK</sequence>